<reference key="1">
    <citation type="submission" date="2000-12" db="EMBL/GenBank/DDBJ databases">
        <title>Homo sapiens complement-c1q tumor necrosis factor-related protein.</title>
        <authorList>
            <person name="Piddington C.S."/>
            <person name="Bishop P."/>
        </authorList>
    </citation>
    <scope>NUCLEOTIDE SEQUENCE [MRNA]</scope>
</reference>
<reference key="2">
    <citation type="journal article" date="2003" name="Genome Res.">
        <title>The secreted protein discovery initiative (SPDI), a large-scale effort to identify novel human secreted and transmembrane proteins: a bioinformatics assessment.</title>
        <authorList>
            <person name="Clark H.F."/>
            <person name="Gurney A.L."/>
            <person name="Abaya E."/>
            <person name="Baker K."/>
            <person name="Baldwin D.T."/>
            <person name="Brush J."/>
            <person name="Chen J."/>
            <person name="Chow B."/>
            <person name="Chui C."/>
            <person name="Crowley C."/>
            <person name="Currell B."/>
            <person name="Deuel B."/>
            <person name="Dowd P."/>
            <person name="Eaton D."/>
            <person name="Foster J.S."/>
            <person name="Grimaldi C."/>
            <person name="Gu Q."/>
            <person name="Hass P.E."/>
            <person name="Heldens S."/>
            <person name="Huang A."/>
            <person name="Kim H.S."/>
            <person name="Klimowski L."/>
            <person name="Jin Y."/>
            <person name="Johnson S."/>
            <person name="Lee J."/>
            <person name="Lewis L."/>
            <person name="Liao D."/>
            <person name="Mark M.R."/>
            <person name="Robbie E."/>
            <person name="Sanchez C."/>
            <person name="Schoenfeld J."/>
            <person name="Seshagiri S."/>
            <person name="Simmons L."/>
            <person name="Singh J."/>
            <person name="Smith V."/>
            <person name="Stinson J."/>
            <person name="Vagts A."/>
            <person name="Vandlen R.L."/>
            <person name="Watanabe C."/>
            <person name="Wieand D."/>
            <person name="Woods K."/>
            <person name="Xie M.-H."/>
            <person name="Yansura D.G."/>
            <person name="Yi S."/>
            <person name="Yu G."/>
            <person name="Yuan J."/>
            <person name="Zhang M."/>
            <person name="Zhang Z."/>
            <person name="Goddard A.D."/>
            <person name="Wood W.I."/>
            <person name="Godowski P.J."/>
            <person name="Gray A.M."/>
        </authorList>
    </citation>
    <scope>NUCLEOTIDE SEQUENCE [LARGE SCALE MRNA]</scope>
</reference>
<reference key="3">
    <citation type="journal article" date="2004" name="Nature">
        <title>The DNA sequence and comparative analysis of human chromosome 5.</title>
        <authorList>
            <person name="Schmutz J."/>
            <person name="Martin J."/>
            <person name="Terry A."/>
            <person name="Couronne O."/>
            <person name="Grimwood J."/>
            <person name="Lowry S."/>
            <person name="Gordon L.A."/>
            <person name="Scott D."/>
            <person name="Xie G."/>
            <person name="Huang W."/>
            <person name="Hellsten U."/>
            <person name="Tran-Gyamfi M."/>
            <person name="She X."/>
            <person name="Prabhakar S."/>
            <person name="Aerts A."/>
            <person name="Altherr M."/>
            <person name="Bajorek E."/>
            <person name="Black S."/>
            <person name="Branscomb E."/>
            <person name="Caoile C."/>
            <person name="Challacombe J.F."/>
            <person name="Chan Y.M."/>
            <person name="Denys M."/>
            <person name="Detter J.C."/>
            <person name="Escobar J."/>
            <person name="Flowers D."/>
            <person name="Fotopulos D."/>
            <person name="Glavina T."/>
            <person name="Gomez M."/>
            <person name="Gonzales E."/>
            <person name="Goodstein D."/>
            <person name="Grigoriev I."/>
            <person name="Groza M."/>
            <person name="Hammon N."/>
            <person name="Hawkins T."/>
            <person name="Haydu L."/>
            <person name="Israni S."/>
            <person name="Jett J."/>
            <person name="Kadner K."/>
            <person name="Kimball H."/>
            <person name="Kobayashi A."/>
            <person name="Lopez F."/>
            <person name="Lou Y."/>
            <person name="Martinez D."/>
            <person name="Medina C."/>
            <person name="Morgan J."/>
            <person name="Nandkeshwar R."/>
            <person name="Noonan J.P."/>
            <person name="Pitluck S."/>
            <person name="Pollard M."/>
            <person name="Predki P."/>
            <person name="Priest J."/>
            <person name="Ramirez L."/>
            <person name="Retterer J."/>
            <person name="Rodriguez A."/>
            <person name="Rogers S."/>
            <person name="Salamov A."/>
            <person name="Salazar A."/>
            <person name="Thayer N."/>
            <person name="Tice H."/>
            <person name="Tsai M."/>
            <person name="Ustaszewska A."/>
            <person name="Vo N."/>
            <person name="Wheeler J."/>
            <person name="Wu K."/>
            <person name="Yang J."/>
            <person name="Dickson M."/>
            <person name="Cheng J.-F."/>
            <person name="Eichler E.E."/>
            <person name="Olsen A."/>
            <person name="Pennacchio L.A."/>
            <person name="Rokhsar D.S."/>
            <person name="Richardson P."/>
            <person name="Lucas S.M."/>
            <person name="Myers R.M."/>
            <person name="Rubin E.M."/>
        </authorList>
    </citation>
    <scope>NUCLEOTIDE SEQUENCE [LARGE SCALE GENOMIC DNA]</scope>
</reference>
<reference key="4">
    <citation type="journal article" date="2004" name="Genome Res.">
        <title>The status, quality, and expansion of the NIH full-length cDNA project: the Mammalian Gene Collection (MGC).</title>
        <authorList>
            <consortium name="The MGC Project Team"/>
        </authorList>
    </citation>
    <scope>NUCLEOTIDE SEQUENCE [LARGE SCALE MRNA]</scope>
    <source>
        <tissue>Brain</tissue>
        <tissue>Muscle</tissue>
    </source>
</reference>
<reference key="5">
    <citation type="journal article" date="2019" name="J. Biol. Chem.">
        <title>C1q/TNF-related protein 2 (CTRP2) deletion promotes adipose tissue lipolysis and hepatic triglyceride secretion.</title>
        <authorList>
            <person name="Lei X."/>
            <person name="Wong G.W."/>
        </authorList>
    </citation>
    <scope>TISSUE SPECIFICITY</scope>
</reference>
<accession>Q9BXJ5</accession>
<evidence type="ECO:0000250" key="1"/>
<evidence type="ECO:0000250" key="2">
    <source>
        <dbReference type="UniProtKB" id="Q9D8U4"/>
    </source>
</evidence>
<evidence type="ECO:0000255" key="3"/>
<evidence type="ECO:0000255" key="4">
    <source>
        <dbReference type="PROSITE-ProRule" id="PRU00368"/>
    </source>
</evidence>
<evidence type="ECO:0000256" key="5">
    <source>
        <dbReference type="SAM" id="MobiDB-lite"/>
    </source>
</evidence>
<evidence type="ECO:0000269" key="6">
    <source>
    </source>
</evidence>
<evidence type="ECO:0000305" key="7"/>
<comment type="function">
    <text evidence="2">Involved in the regulation of lipid metabolism in adipose tissue and liver.</text>
</comment>
<comment type="subunit">
    <text evidence="1">May interact with ERFE.</text>
</comment>
<comment type="interaction">
    <interactant intactId="EBI-2817707">
        <id>Q9BXJ5</id>
    </interactant>
    <interactant intactId="EBI-8643161">
        <id>Q9NX04</id>
        <label>AIRIM</label>
    </interactant>
    <organismsDiffer>false</organismsDiffer>
    <experiments>3</experiments>
</comment>
<comment type="interaction">
    <interactant intactId="EBI-2817707">
        <id>Q9BXJ5</id>
    </interactant>
    <interactant intactId="EBI-17183751">
        <id>X5D778</id>
        <label>ANKRD11</label>
    </interactant>
    <organismsDiffer>false</organismsDiffer>
    <experiments>3</experiments>
</comment>
<comment type="interaction">
    <interactant intactId="EBI-2817707">
        <id>Q9BXJ5</id>
    </interactant>
    <interactant intactId="EBI-11524452">
        <id>Q8N9N5-2</id>
        <label>BANP</label>
    </interactant>
    <organismsDiffer>false</organismsDiffer>
    <experiments>3</experiments>
</comment>
<comment type="interaction">
    <interactant intactId="EBI-2817707">
        <id>Q9BXJ5</id>
    </interactant>
    <interactant intactId="EBI-741528">
        <id>Q9UKJ5</id>
        <label>CHIC2</label>
    </interactant>
    <organismsDiffer>false</organismsDiffer>
    <experiments>3</experiments>
</comment>
<comment type="interaction">
    <interactant intactId="EBI-2817707">
        <id>Q9BXJ5</id>
    </interactant>
    <interactant intactId="EBI-751540">
        <id>O95872</id>
        <label>GPANK1</label>
    </interactant>
    <organismsDiffer>false</organismsDiffer>
    <experiments>3</experiments>
</comment>
<comment type="interaction">
    <interactant intactId="EBI-2817707">
        <id>Q9BXJ5</id>
    </interactant>
    <interactant intactId="EBI-12197079">
        <id>P84074</id>
        <label>HPCA</label>
    </interactant>
    <organismsDiffer>false</organismsDiffer>
    <experiments>6</experiments>
</comment>
<comment type="interaction">
    <interactant intactId="EBI-2817707">
        <id>Q9BXJ5</id>
    </interactant>
    <interactant intactId="EBI-749311">
        <id>P37235</id>
        <label>HPCAL1</label>
    </interactant>
    <organismsDiffer>false</organismsDiffer>
    <experiments>11</experiments>
</comment>
<comment type="interaction">
    <interactant intactId="EBI-2817707">
        <id>Q9BXJ5</id>
    </interactant>
    <interactant intactId="EBI-751501">
        <id>Q9Y2W7</id>
        <label>KCNIP3</label>
    </interactant>
    <organismsDiffer>false</organismsDiffer>
    <experiments>3</experiments>
</comment>
<comment type="interaction">
    <interactant intactId="EBI-2817707">
        <id>Q9BXJ5</id>
    </interactant>
    <interactant intactId="EBI-740929">
        <id>Q53G59</id>
        <label>KLHL12</label>
    </interactant>
    <organismsDiffer>false</organismsDiffer>
    <experiments>6</experiments>
</comment>
<comment type="interaction">
    <interactant intactId="EBI-2817707">
        <id>Q9BXJ5</id>
    </interactant>
    <interactant intactId="EBI-13287659">
        <id>P06239-3</id>
        <label>LCK</label>
    </interactant>
    <organismsDiffer>false</organismsDiffer>
    <experiments>3</experiments>
</comment>
<comment type="interaction">
    <interactant intactId="EBI-2817707">
        <id>Q9BXJ5</id>
    </interactant>
    <interactant intactId="EBI-10274069">
        <id>Q8TCE9</id>
        <label>LGALS14</label>
    </interactant>
    <organismsDiffer>false</organismsDiffer>
    <experiments>3</experiments>
</comment>
<comment type="interaction">
    <interactant intactId="EBI-2817707">
        <id>Q9BXJ5</id>
    </interactant>
    <interactant intactId="EBI-7415268">
        <id>O75431</id>
        <label>MTX2</label>
    </interactant>
    <organismsDiffer>false</organismsDiffer>
    <experiments>3</experiments>
</comment>
<comment type="interaction">
    <interactant intactId="EBI-2817707">
        <id>Q9BXJ5</id>
    </interactant>
    <interactant intactId="EBI-749635">
        <id>P61601</id>
        <label>NCALD</label>
    </interactant>
    <organismsDiffer>false</organismsDiffer>
    <experiments>12</experiments>
</comment>
<comment type="interaction">
    <interactant intactId="EBI-2817707">
        <id>Q9BXJ5</id>
    </interactant>
    <interactant intactId="EBI-746987">
        <id>P62166</id>
        <label>NCS1</label>
    </interactant>
    <organismsDiffer>false</organismsDiffer>
    <experiments>3</experiments>
</comment>
<comment type="interaction">
    <interactant intactId="EBI-2817707">
        <id>Q9BXJ5</id>
    </interactant>
    <interactant intactId="EBI-10190763">
        <id>O94818-2</id>
        <label>NOL4</label>
    </interactant>
    <organismsDiffer>false</organismsDiffer>
    <experiments>3</experiments>
</comment>
<comment type="interaction">
    <interactant intactId="EBI-2817707">
        <id>Q9BXJ5</id>
    </interactant>
    <interactant intactId="EBI-10181968">
        <id>Q7Z4N8</id>
        <label>P4HA3</label>
    </interactant>
    <organismsDiffer>false</organismsDiffer>
    <experiments>3</experiments>
</comment>
<comment type="interaction">
    <interactant intactId="EBI-2817707">
        <id>Q9BXJ5</id>
    </interactant>
    <interactant intactId="EBI-2861380">
        <id>Q8TCD6</id>
        <label>PHOSPHO2</label>
    </interactant>
    <organismsDiffer>false</organismsDiffer>
    <experiments>3</experiments>
</comment>
<comment type="interaction">
    <interactant intactId="EBI-2817707">
        <id>Q9BXJ5</id>
    </interactant>
    <interactant intactId="EBI-11955057">
        <id>Q8N8B7-2</id>
        <label>TCEANC</label>
    </interactant>
    <organismsDiffer>false</organismsDiffer>
    <experiments>3</experiments>
</comment>
<comment type="interaction">
    <interactant intactId="EBI-2817707">
        <id>Q9BXJ5</id>
    </interactant>
    <interactant intactId="EBI-1049822">
        <id>O60220</id>
        <label>TIMM8A</label>
    </interactant>
    <organismsDiffer>false</organismsDiffer>
    <experiments>3</experiments>
</comment>
<comment type="interaction">
    <interactant intactId="EBI-2817707">
        <id>Q9BXJ5</id>
    </interactant>
    <interactant intactId="EBI-2130429">
        <id>Q9BYV2</id>
        <label>TRIM54</label>
    </interactant>
    <organismsDiffer>false</organismsDiffer>
    <experiments>3</experiments>
</comment>
<comment type="interaction">
    <interactant intactId="EBI-2817707">
        <id>Q9BXJ5</id>
    </interactant>
    <interactant intactId="EBI-10173939">
        <id>Q9UMX0-2</id>
        <label>UBQLN1</label>
    </interactant>
    <organismsDiffer>false</organismsDiffer>
    <experiments>3</experiments>
</comment>
<comment type="interaction">
    <interactant intactId="EBI-2817707">
        <id>Q9BXJ5</id>
    </interactant>
    <interactant intactId="EBI-947187">
        <id>Q9UHD9</id>
        <label>UBQLN2</label>
    </interactant>
    <organismsDiffer>false</organismsDiffer>
    <experiments>3</experiments>
</comment>
<comment type="interaction">
    <interactant intactId="EBI-2817707">
        <id>Q9BXJ5</id>
    </interactant>
    <interactant intactId="EBI-2511991">
        <id>Q9Y2K6</id>
        <label>USP20</label>
    </interactant>
    <organismsDiffer>false</organismsDiffer>
    <experiments>3</experiments>
</comment>
<comment type="interaction">
    <interactant intactId="EBI-2817707">
        <id>Q9BXJ5</id>
    </interactant>
    <interactant intactId="EBI-740943">
        <id>P62760</id>
        <label>VSNL1</label>
    </interactant>
    <organismsDiffer>false</organismsDiffer>
    <experiments>3</experiments>
</comment>
<comment type="subcellular location">
    <subcellularLocation>
        <location evidence="7">Secreted</location>
    </subcellularLocation>
</comment>
<comment type="tissue specificity">
    <text evidence="6">Expressed in adipose tissue.</text>
</comment>
<comment type="sequence caution" evidence="7">
    <conflict type="erroneous initiation">
        <sequence resource="EMBL-CDS" id="AAH11699"/>
    </conflict>
</comment>
<comment type="sequence caution" evidence="7">
    <conflict type="erroneous initiation">
        <sequence resource="EMBL-CDS" id="AAH54506"/>
    </conflict>
</comment>
<dbReference type="EMBL" id="AF329836">
    <property type="protein sequence ID" value="AAK17960.1"/>
    <property type="molecule type" value="mRNA"/>
</dbReference>
<dbReference type="EMBL" id="AY358839">
    <property type="protein sequence ID" value="AAQ89198.1"/>
    <property type="molecule type" value="mRNA"/>
</dbReference>
<dbReference type="EMBL" id="AC091842">
    <property type="status" value="NOT_ANNOTATED_CDS"/>
    <property type="molecule type" value="Genomic_DNA"/>
</dbReference>
<dbReference type="EMBL" id="AC112191">
    <property type="status" value="NOT_ANNOTATED_CDS"/>
    <property type="molecule type" value="Genomic_DNA"/>
</dbReference>
<dbReference type="EMBL" id="BC011699">
    <property type="protein sequence ID" value="AAH11699.2"/>
    <property type="status" value="ALT_INIT"/>
    <property type="molecule type" value="mRNA"/>
</dbReference>
<dbReference type="EMBL" id="BC054506">
    <property type="protein sequence ID" value="AAH54506.2"/>
    <property type="status" value="ALT_INIT"/>
    <property type="molecule type" value="mRNA"/>
</dbReference>
<dbReference type="CCDS" id="CCDS4351.3"/>
<dbReference type="RefSeq" id="NP_114114.3">
    <property type="nucleotide sequence ID" value="NM_031908.6"/>
</dbReference>
<dbReference type="SMR" id="Q9BXJ5"/>
<dbReference type="BioGRID" id="125389">
    <property type="interactions" value="65"/>
</dbReference>
<dbReference type="FunCoup" id="Q9BXJ5">
    <property type="interactions" value="11"/>
</dbReference>
<dbReference type="IntAct" id="Q9BXJ5">
    <property type="interactions" value="60"/>
</dbReference>
<dbReference type="STRING" id="9606.ENSP00000377545"/>
<dbReference type="GlyGen" id="Q9BXJ5">
    <property type="glycosylation" value="1 site, 1 N-linked glycan (1 site)"/>
</dbReference>
<dbReference type="iPTMnet" id="Q9BXJ5"/>
<dbReference type="PhosphoSitePlus" id="Q9BXJ5"/>
<dbReference type="BioMuta" id="C1QTNF2"/>
<dbReference type="DMDM" id="20177866"/>
<dbReference type="MassIVE" id="Q9BXJ5"/>
<dbReference type="PaxDb" id="9606-ENSP00000377545"/>
<dbReference type="PeptideAtlas" id="Q9BXJ5"/>
<dbReference type="ProteomicsDB" id="79439"/>
<dbReference type="Antibodypedia" id="16666">
    <property type="antibodies" value="250 antibodies from 31 providers"/>
</dbReference>
<dbReference type="DNASU" id="114898"/>
<dbReference type="Ensembl" id="ENST00000652664.2">
    <property type="protein sequence ID" value="ENSP00000498651.1"/>
    <property type="gene ID" value="ENSG00000145861.9"/>
</dbReference>
<dbReference type="GeneID" id="114898"/>
<dbReference type="KEGG" id="hsa:114898"/>
<dbReference type="MANE-Select" id="ENST00000652664.2">
    <property type="protein sequence ID" value="ENSP00000498651.1"/>
    <property type="RefSeq nucleotide sequence ID" value="NM_031908.6"/>
    <property type="RefSeq protein sequence ID" value="NP_114114.3"/>
</dbReference>
<dbReference type="UCSC" id="uc003lyd.4">
    <property type="organism name" value="human"/>
</dbReference>
<dbReference type="AGR" id="HGNC:14325"/>
<dbReference type="CTD" id="114898"/>
<dbReference type="DisGeNET" id="114898"/>
<dbReference type="GeneCards" id="C1QTNF2"/>
<dbReference type="HGNC" id="HGNC:14325">
    <property type="gene designation" value="C1QTNF2"/>
</dbReference>
<dbReference type="HPA" id="ENSG00000145861">
    <property type="expression patterns" value="Low tissue specificity"/>
</dbReference>
<dbReference type="MIM" id="618647">
    <property type="type" value="gene"/>
</dbReference>
<dbReference type="neXtProt" id="NX_Q9BXJ5"/>
<dbReference type="OpenTargets" id="ENSG00000145861"/>
<dbReference type="PharmGKB" id="PA25629"/>
<dbReference type="VEuPathDB" id="HostDB:ENSG00000145861"/>
<dbReference type="eggNOG" id="ENOG502QT1U">
    <property type="taxonomic scope" value="Eukaryota"/>
</dbReference>
<dbReference type="GeneTree" id="ENSGT00940000159591"/>
<dbReference type="HOGENOM" id="CLU_001074_0_3_1"/>
<dbReference type="InParanoid" id="Q9BXJ5"/>
<dbReference type="OMA" id="AMIPWVL"/>
<dbReference type="OrthoDB" id="9889709at2759"/>
<dbReference type="PAN-GO" id="Q9BXJ5">
    <property type="GO annotations" value="0 GO annotations based on evolutionary models"/>
</dbReference>
<dbReference type="PhylomeDB" id="Q9BXJ5"/>
<dbReference type="TreeFam" id="TF329591"/>
<dbReference type="PathwayCommons" id="Q9BXJ5"/>
<dbReference type="SignaLink" id="Q9BXJ5"/>
<dbReference type="BioGRID-ORCS" id="114898">
    <property type="hits" value="10 hits in 1141 CRISPR screens"/>
</dbReference>
<dbReference type="ChiTaRS" id="C1QTNF2">
    <property type="organism name" value="human"/>
</dbReference>
<dbReference type="GenomeRNAi" id="114898"/>
<dbReference type="Pharos" id="Q9BXJ5">
    <property type="development level" value="Tbio"/>
</dbReference>
<dbReference type="PRO" id="PR:Q9BXJ5"/>
<dbReference type="Proteomes" id="UP000005640">
    <property type="component" value="Chromosome 5"/>
</dbReference>
<dbReference type="RNAct" id="Q9BXJ5">
    <property type="molecule type" value="protein"/>
</dbReference>
<dbReference type="Bgee" id="ENSG00000145861">
    <property type="expression patterns" value="Expressed in ascending aorta and 106 other cell types or tissues"/>
</dbReference>
<dbReference type="ExpressionAtlas" id="Q9BXJ5">
    <property type="expression patterns" value="baseline and differential"/>
</dbReference>
<dbReference type="GO" id="GO:0005581">
    <property type="term" value="C:collagen trimer"/>
    <property type="evidence" value="ECO:0007669"/>
    <property type="project" value="UniProtKB-KW"/>
</dbReference>
<dbReference type="GO" id="GO:0005576">
    <property type="term" value="C:extracellular region"/>
    <property type="evidence" value="ECO:0007669"/>
    <property type="project" value="UniProtKB-SubCell"/>
</dbReference>
<dbReference type="GO" id="GO:0019216">
    <property type="term" value="P:regulation of lipid metabolic process"/>
    <property type="evidence" value="ECO:0000250"/>
    <property type="project" value="UniProtKB"/>
</dbReference>
<dbReference type="FunFam" id="2.60.120.40:FF:000001">
    <property type="entry name" value="Complement C1q B chain"/>
    <property type="match status" value="1"/>
</dbReference>
<dbReference type="Gene3D" id="2.60.120.40">
    <property type="match status" value="1"/>
</dbReference>
<dbReference type="InterPro" id="IPR001073">
    <property type="entry name" value="C1q_dom"/>
</dbReference>
<dbReference type="InterPro" id="IPR008160">
    <property type="entry name" value="Collagen"/>
</dbReference>
<dbReference type="InterPro" id="IPR050392">
    <property type="entry name" value="Collagen/C1q_domain"/>
</dbReference>
<dbReference type="InterPro" id="IPR008983">
    <property type="entry name" value="Tumour_necrosis_fac-like_dom"/>
</dbReference>
<dbReference type="PANTHER" id="PTHR15427:SF28">
    <property type="entry name" value="COMPLEMENT C1Q TUMOR NECROSIS FACTOR-RELATED PROTEIN 2"/>
    <property type="match status" value="1"/>
</dbReference>
<dbReference type="PANTHER" id="PTHR15427">
    <property type="entry name" value="EMILIN ELASTIN MICROFIBRIL INTERFACE-LOCATED PROTEIN ELASTIN MICROFIBRIL INTERFACER"/>
    <property type="match status" value="1"/>
</dbReference>
<dbReference type="Pfam" id="PF00386">
    <property type="entry name" value="C1q"/>
    <property type="match status" value="1"/>
</dbReference>
<dbReference type="Pfam" id="PF01391">
    <property type="entry name" value="Collagen"/>
    <property type="match status" value="2"/>
</dbReference>
<dbReference type="PRINTS" id="PR00007">
    <property type="entry name" value="COMPLEMNTC1Q"/>
</dbReference>
<dbReference type="SMART" id="SM00110">
    <property type="entry name" value="C1Q"/>
    <property type="match status" value="1"/>
</dbReference>
<dbReference type="SUPFAM" id="SSF49842">
    <property type="entry name" value="TNF-like"/>
    <property type="match status" value="1"/>
</dbReference>
<dbReference type="PROSITE" id="PS50871">
    <property type="entry name" value="C1Q"/>
    <property type="match status" value="1"/>
</dbReference>
<keyword id="KW-0176">Collagen</keyword>
<keyword id="KW-1267">Proteomics identification</keyword>
<keyword id="KW-1185">Reference proteome</keyword>
<keyword id="KW-0964">Secreted</keyword>
<keyword id="KW-0732">Signal</keyword>
<gene>
    <name type="primary">C1QTNF2</name>
    <name type="synonym">CTRP2</name>
    <name type="ORF">UNQ6349/PRO21054</name>
</gene>
<name>C1QT2_HUMAN</name>
<organism>
    <name type="scientific">Homo sapiens</name>
    <name type="common">Human</name>
    <dbReference type="NCBI Taxonomy" id="9606"/>
    <lineage>
        <taxon>Eukaryota</taxon>
        <taxon>Metazoa</taxon>
        <taxon>Chordata</taxon>
        <taxon>Craniata</taxon>
        <taxon>Vertebrata</taxon>
        <taxon>Euteleostomi</taxon>
        <taxon>Mammalia</taxon>
        <taxon>Eutheria</taxon>
        <taxon>Euarchontoglires</taxon>
        <taxon>Primates</taxon>
        <taxon>Haplorrhini</taxon>
        <taxon>Catarrhini</taxon>
        <taxon>Hominidae</taxon>
        <taxon>Homo</taxon>
    </lineage>
</organism>
<proteinExistence type="evidence at protein level"/>
<feature type="signal peptide" evidence="3">
    <location>
        <begin position="1"/>
        <end position="15"/>
    </location>
</feature>
<feature type="chain" id="PRO_0000003530" description="Complement C1q tumor necrosis factor-related protein 2">
    <location>
        <begin position="16"/>
        <end position="285"/>
    </location>
</feature>
<feature type="domain" description="Collagen-like">
    <location>
        <begin position="40"/>
        <end position="141"/>
    </location>
</feature>
<feature type="domain" description="C1q" evidence="4">
    <location>
        <begin position="145"/>
        <end position="281"/>
    </location>
</feature>
<feature type="region of interest" description="Disordered" evidence="5">
    <location>
        <begin position="33"/>
        <end position="144"/>
    </location>
</feature>
<feature type="compositionally biased region" description="Pro residues" evidence="5">
    <location>
        <begin position="41"/>
        <end position="51"/>
    </location>
</feature>
<feature type="compositionally biased region" description="Low complexity" evidence="5">
    <location>
        <begin position="53"/>
        <end position="65"/>
    </location>
</feature>
<feature type="compositionally biased region" description="Basic and acidic residues" evidence="5">
    <location>
        <begin position="66"/>
        <end position="78"/>
    </location>
</feature>
<feature type="compositionally biased region" description="Low complexity" evidence="5">
    <location>
        <begin position="84"/>
        <end position="120"/>
    </location>
</feature>
<sequence length="285" mass="29952">MIPWVLLACALPCAADPLLGAFARRDFRKGSPQLVCSLPGPQGPPGPPGAPGPSGMMGRMGFPGKDGQDGHDGDRGDSGEEGPPGRTGNRGKPGPKGKAGAIGRAGPRGPKGVNGTPGKHGTPGKKGPKGKKGEPGLPGPCSCGSGHTKSAFSVAVTKSYPRERLPIKFDKILMNEGGHYNASSGKFVCGVPGIYYFTYDITLANKHLAIGLVHNGQYRIRTFDANTGNHDVASGSTILALKQGDEVWLQIFYSEQNGLFYDPYWTDSLFTGFLIYADQDDPNEV</sequence>
<protein>
    <recommendedName>
        <fullName>Complement C1q tumor necrosis factor-related protein 2</fullName>
    </recommendedName>
</protein>